<accession>Q4UJS3</accession>
<gene>
    <name type="ordered locus">RF_1365</name>
</gene>
<name>Y1365_RICFE</name>
<proteinExistence type="inferred from homology"/>
<feature type="chain" id="PRO_0000278020" description="Nucleoid-associated protein RF_1365">
    <location>
        <begin position="1"/>
        <end position="107"/>
    </location>
</feature>
<comment type="function">
    <text evidence="1">Binds to DNA and alters its conformation. May be involved in regulation of gene expression, nucleoid organization and DNA protection.</text>
</comment>
<comment type="subunit">
    <text evidence="1">Homodimer.</text>
</comment>
<comment type="subcellular location">
    <subcellularLocation>
        <location evidence="1">Cytoplasm</location>
        <location evidence="1">Nucleoid</location>
    </subcellularLocation>
</comment>
<comment type="similarity">
    <text evidence="1">Belongs to the YbaB/EbfC family.</text>
</comment>
<organism>
    <name type="scientific">Rickettsia felis (strain ATCC VR-1525 / URRWXCal2)</name>
    <name type="common">Rickettsia azadi</name>
    <dbReference type="NCBI Taxonomy" id="315456"/>
    <lineage>
        <taxon>Bacteria</taxon>
        <taxon>Pseudomonadati</taxon>
        <taxon>Pseudomonadota</taxon>
        <taxon>Alphaproteobacteria</taxon>
        <taxon>Rickettsiales</taxon>
        <taxon>Rickettsiaceae</taxon>
        <taxon>Rickettsieae</taxon>
        <taxon>Rickettsia</taxon>
        <taxon>spotted fever group</taxon>
    </lineage>
</organism>
<keyword id="KW-0963">Cytoplasm</keyword>
<keyword id="KW-0238">DNA-binding</keyword>
<reference key="1">
    <citation type="journal article" date="2005" name="PLoS Biol.">
        <title>The genome sequence of Rickettsia felis identifies the first putative conjugative plasmid in an obligate intracellular parasite.</title>
        <authorList>
            <person name="Ogata H."/>
            <person name="Renesto P."/>
            <person name="Audic S."/>
            <person name="Robert C."/>
            <person name="Blanc G."/>
            <person name="Fournier P.-E."/>
            <person name="Parinello H."/>
            <person name="Claverie J.-M."/>
            <person name="Raoult D."/>
        </authorList>
    </citation>
    <scope>NUCLEOTIDE SEQUENCE [LARGE SCALE GENOMIC DNA]</scope>
    <source>
        <strain>ATCC VR-1525 / URRWXCal2</strain>
    </source>
</reference>
<sequence length="107" mass="11801">MVNFNQFLKQAQSMQKKMQEAQEQMANARYTGKAGGGLVEVIATGKGEVEKITIDESLLKPEEKEMLEDLIKVAFNDAKQKCDEDSQNSLSGALNGMSLPPGFKMPF</sequence>
<evidence type="ECO:0000255" key="1">
    <source>
        <dbReference type="HAMAP-Rule" id="MF_00274"/>
    </source>
</evidence>
<dbReference type="EMBL" id="CP000053">
    <property type="protein sequence ID" value="AAY62216.1"/>
    <property type="molecule type" value="Genomic_DNA"/>
</dbReference>
<dbReference type="SMR" id="Q4UJS3"/>
<dbReference type="STRING" id="315456.RF_1365"/>
<dbReference type="KEGG" id="rfe:RF_1365"/>
<dbReference type="eggNOG" id="COG0718">
    <property type="taxonomic scope" value="Bacteria"/>
</dbReference>
<dbReference type="HOGENOM" id="CLU_140930_0_0_5"/>
<dbReference type="OrthoDB" id="9803080at2"/>
<dbReference type="Proteomes" id="UP000008548">
    <property type="component" value="Chromosome"/>
</dbReference>
<dbReference type="GO" id="GO:0043590">
    <property type="term" value="C:bacterial nucleoid"/>
    <property type="evidence" value="ECO:0007669"/>
    <property type="project" value="UniProtKB-UniRule"/>
</dbReference>
<dbReference type="GO" id="GO:0005829">
    <property type="term" value="C:cytosol"/>
    <property type="evidence" value="ECO:0007669"/>
    <property type="project" value="TreeGrafter"/>
</dbReference>
<dbReference type="GO" id="GO:0003677">
    <property type="term" value="F:DNA binding"/>
    <property type="evidence" value="ECO:0007669"/>
    <property type="project" value="UniProtKB-UniRule"/>
</dbReference>
<dbReference type="Gene3D" id="3.30.1310.10">
    <property type="entry name" value="Nucleoid-associated protein YbaB-like domain"/>
    <property type="match status" value="1"/>
</dbReference>
<dbReference type="HAMAP" id="MF_00274">
    <property type="entry name" value="DNA_YbaB_EbfC"/>
    <property type="match status" value="1"/>
</dbReference>
<dbReference type="InterPro" id="IPR036894">
    <property type="entry name" value="YbaB-like_sf"/>
</dbReference>
<dbReference type="InterPro" id="IPR004401">
    <property type="entry name" value="YbaB/EbfC"/>
</dbReference>
<dbReference type="NCBIfam" id="TIGR00103">
    <property type="entry name" value="DNA_YbaB_EbfC"/>
    <property type="match status" value="1"/>
</dbReference>
<dbReference type="PANTHER" id="PTHR33449">
    <property type="entry name" value="NUCLEOID-ASSOCIATED PROTEIN YBAB"/>
    <property type="match status" value="1"/>
</dbReference>
<dbReference type="PANTHER" id="PTHR33449:SF1">
    <property type="entry name" value="NUCLEOID-ASSOCIATED PROTEIN YBAB"/>
    <property type="match status" value="1"/>
</dbReference>
<dbReference type="Pfam" id="PF02575">
    <property type="entry name" value="YbaB_DNA_bd"/>
    <property type="match status" value="1"/>
</dbReference>
<dbReference type="PIRSF" id="PIRSF004555">
    <property type="entry name" value="UCP004555"/>
    <property type="match status" value="1"/>
</dbReference>
<dbReference type="SUPFAM" id="SSF82607">
    <property type="entry name" value="YbaB-like"/>
    <property type="match status" value="1"/>
</dbReference>
<protein>
    <recommendedName>
        <fullName evidence="1">Nucleoid-associated protein RF_1365</fullName>
    </recommendedName>
</protein>